<accession>A4WCS0</accession>
<name>5DNU_ENT38</name>
<keyword id="KW-0963">Cytoplasm</keyword>
<keyword id="KW-0378">Hydrolase</keyword>
<keyword id="KW-0479">Metal-binding</keyword>
<keyword id="KW-0547">Nucleotide-binding</keyword>
<proteinExistence type="inferred from homology"/>
<protein>
    <recommendedName>
        <fullName evidence="1">5'-deoxynucleotidase Ent638_2835</fullName>
        <ecNumber evidence="1">3.1.3.89</ecNumber>
    </recommendedName>
    <alternativeName>
        <fullName evidence="1">5'-deoxyribonucleotidase</fullName>
    </alternativeName>
    <alternativeName>
        <fullName evidence="1">Nucleoside 5'-monophosphate phosphohydrolase</fullName>
    </alternativeName>
</protein>
<feature type="chain" id="PRO_1000064953" description="5'-deoxynucleotidase Ent638_2835">
    <location>
        <begin position="1"/>
        <end position="199"/>
    </location>
</feature>
<feature type="domain" description="HD" evidence="2">
    <location>
        <begin position="30"/>
        <end position="142"/>
    </location>
</feature>
<feature type="binding site" evidence="1">
    <location>
        <begin position="18"/>
        <end position="19"/>
    </location>
    <ligand>
        <name>substrate</name>
    </ligand>
</feature>
<feature type="binding site" evidence="1">
    <location>
        <position position="33"/>
    </location>
    <ligand>
        <name>a divalent metal cation</name>
        <dbReference type="ChEBI" id="CHEBI:60240"/>
    </ligand>
</feature>
<feature type="binding site" evidence="1">
    <location>
        <position position="33"/>
    </location>
    <ligand>
        <name>substrate</name>
    </ligand>
</feature>
<feature type="binding site" evidence="1">
    <location>
        <position position="68"/>
    </location>
    <ligand>
        <name>a divalent metal cation</name>
        <dbReference type="ChEBI" id="CHEBI:60240"/>
    </ligand>
</feature>
<feature type="binding site" evidence="1">
    <location>
        <position position="69"/>
    </location>
    <ligand>
        <name>a divalent metal cation</name>
        <dbReference type="ChEBI" id="CHEBI:60240"/>
    </ligand>
</feature>
<feature type="binding site" evidence="1">
    <location>
        <position position="69"/>
    </location>
    <ligand>
        <name>substrate</name>
    </ligand>
</feature>
<feature type="binding site" evidence="1">
    <location>
        <begin position="77"/>
        <end position="80"/>
    </location>
    <ligand>
        <name>substrate</name>
    </ligand>
</feature>
<feature type="binding site" evidence="1">
    <location>
        <position position="137"/>
    </location>
    <ligand>
        <name>a divalent metal cation</name>
        <dbReference type="ChEBI" id="CHEBI:60240"/>
    </ligand>
</feature>
<feature type="binding site" evidence="1">
    <location>
        <position position="137"/>
    </location>
    <ligand>
        <name>substrate</name>
    </ligand>
</feature>
<feature type="site" description="Appears to be important in orienting the phosphate for catalysis" evidence="1">
    <location>
        <position position="18"/>
    </location>
</feature>
<comment type="function">
    <text evidence="1">Catalyzes the strictly specific dephosphorylation of 2'-deoxyribonucleoside 5'-monophosphates.</text>
</comment>
<comment type="catalytic activity">
    <reaction evidence="1">
        <text>a 2'-deoxyribonucleoside 5'-phosphate + H2O = a 2'-deoxyribonucleoside + phosphate</text>
        <dbReference type="Rhea" id="RHEA:36167"/>
        <dbReference type="ChEBI" id="CHEBI:15377"/>
        <dbReference type="ChEBI" id="CHEBI:18274"/>
        <dbReference type="ChEBI" id="CHEBI:43474"/>
        <dbReference type="ChEBI" id="CHEBI:65317"/>
        <dbReference type="EC" id="3.1.3.89"/>
    </reaction>
</comment>
<comment type="cofactor">
    <cofactor evidence="1">
        <name>a divalent metal cation</name>
        <dbReference type="ChEBI" id="CHEBI:60240"/>
    </cofactor>
</comment>
<comment type="subunit">
    <text evidence="1">Homodimer.</text>
</comment>
<comment type="subcellular location">
    <subcellularLocation>
        <location evidence="1">Cytoplasm</location>
    </subcellularLocation>
</comment>
<comment type="similarity">
    <text evidence="1">Belongs to the 5DNU family.</text>
</comment>
<evidence type="ECO:0000255" key="1">
    <source>
        <dbReference type="HAMAP-Rule" id="MF_01100"/>
    </source>
</evidence>
<evidence type="ECO:0000255" key="2">
    <source>
        <dbReference type="PROSITE-ProRule" id="PRU01175"/>
    </source>
</evidence>
<dbReference type="EC" id="3.1.3.89" evidence="1"/>
<dbReference type="EMBL" id="CP000653">
    <property type="protein sequence ID" value="ABP61500.1"/>
    <property type="molecule type" value="Genomic_DNA"/>
</dbReference>
<dbReference type="RefSeq" id="WP_015959833.1">
    <property type="nucleotide sequence ID" value="NC_009436.1"/>
</dbReference>
<dbReference type="SMR" id="A4WCS0"/>
<dbReference type="STRING" id="399742.Ent638_2835"/>
<dbReference type="KEGG" id="ent:Ent638_2835"/>
<dbReference type="eggNOG" id="COG1896">
    <property type="taxonomic scope" value="Bacteria"/>
</dbReference>
<dbReference type="HOGENOM" id="CLU_084784_0_0_6"/>
<dbReference type="OrthoDB" id="9812744at2"/>
<dbReference type="Proteomes" id="UP000000230">
    <property type="component" value="Chromosome"/>
</dbReference>
<dbReference type="GO" id="GO:0005737">
    <property type="term" value="C:cytoplasm"/>
    <property type="evidence" value="ECO:0007669"/>
    <property type="project" value="UniProtKB-SubCell"/>
</dbReference>
<dbReference type="GO" id="GO:0002953">
    <property type="term" value="F:5'-deoxynucleotidase activity"/>
    <property type="evidence" value="ECO:0007669"/>
    <property type="project" value="UniProtKB-EC"/>
</dbReference>
<dbReference type="GO" id="GO:0046872">
    <property type="term" value="F:metal ion binding"/>
    <property type="evidence" value="ECO:0007669"/>
    <property type="project" value="UniProtKB-KW"/>
</dbReference>
<dbReference type="GO" id="GO:0000166">
    <property type="term" value="F:nucleotide binding"/>
    <property type="evidence" value="ECO:0007669"/>
    <property type="project" value="UniProtKB-KW"/>
</dbReference>
<dbReference type="CDD" id="cd00077">
    <property type="entry name" value="HDc"/>
    <property type="match status" value="1"/>
</dbReference>
<dbReference type="FunFam" id="1.10.3210.10:FF:000002">
    <property type="entry name" value="Nucleotidase YfbR"/>
    <property type="match status" value="1"/>
</dbReference>
<dbReference type="Gene3D" id="1.10.3210.10">
    <property type="entry name" value="Hypothetical protein af1432"/>
    <property type="match status" value="1"/>
</dbReference>
<dbReference type="HAMAP" id="MF_01100">
    <property type="entry name" value="5DNU"/>
    <property type="match status" value="1"/>
</dbReference>
<dbReference type="InterPro" id="IPR003607">
    <property type="entry name" value="HD/PDEase_dom"/>
</dbReference>
<dbReference type="InterPro" id="IPR006674">
    <property type="entry name" value="HD_domain"/>
</dbReference>
<dbReference type="InterPro" id="IPR022971">
    <property type="entry name" value="YfbR"/>
</dbReference>
<dbReference type="InterPro" id="IPR039356">
    <property type="entry name" value="YfbR/HDDC2"/>
</dbReference>
<dbReference type="NCBIfam" id="NF003009">
    <property type="entry name" value="PRK03826.1"/>
    <property type="match status" value="1"/>
</dbReference>
<dbReference type="PANTHER" id="PTHR11845">
    <property type="entry name" value="5'-DEOXYNUCLEOTIDASE HDDC2"/>
    <property type="match status" value="1"/>
</dbReference>
<dbReference type="PANTHER" id="PTHR11845:SF13">
    <property type="entry name" value="5'-DEOXYNUCLEOTIDASE HDDC2"/>
    <property type="match status" value="1"/>
</dbReference>
<dbReference type="Pfam" id="PF12917">
    <property type="entry name" value="YfbR-like"/>
    <property type="match status" value="1"/>
</dbReference>
<dbReference type="SMART" id="SM00471">
    <property type="entry name" value="HDc"/>
    <property type="match status" value="1"/>
</dbReference>
<dbReference type="SUPFAM" id="SSF109604">
    <property type="entry name" value="HD-domain/PDEase-like"/>
    <property type="match status" value="1"/>
</dbReference>
<dbReference type="PROSITE" id="PS51831">
    <property type="entry name" value="HD"/>
    <property type="match status" value="1"/>
</dbReference>
<sequence>MSQSHFFAHLSRLKLINRWPLMRNVRTENVSEHSLQVAMVAHALAAIKNRKFNGNVNAERIALLAMYHDASEVLTGDLPTPVKYFNSQIAQEYKAIEKIAQQKLVDMVPEELRDIFAALIDEHQCSEEERLLVKQADALCAYLKCLEELSAGNNEFLLAKSRLEKTLESRRSEEMDYFMQVFVPSFQLSLDEISQDSPL</sequence>
<gene>
    <name type="ordered locus">Ent638_2835</name>
</gene>
<organism>
    <name type="scientific">Enterobacter sp. (strain 638)</name>
    <dbReference type="NCBI Taxonomy" id="399742"/>
    <lineage>
        <taxon>Bacteria</taxon>
        <taxon>Pseudomonadati</taxon>
        <taxon>Pseudomonadota</taxon>
        <taxon>Gammaproteobacteria</taxon>
        <taxon>Enterobacterales</taxon>
        <taxon>Enterobacteriaceae</taxon>
        <taxon>Enterobacter</taxon>
    </lineage>
</organism>
<reference key="1">
    <citation type="journal article" date="2010" name="PLoS Genet.">
        <title>Genome sequence of the plant growth promoting endophytic bacterium Enterobacter sp. 638.</title>
        <authorList>
            <person name="Taghavi S."/>
            <person name="van der Lelie D."/>
            <person name="Hoffman A."/>
            <person name="Zhang Y.B."/>
            <person name="Walla M.D."/>
            <person name="Vangronsveld J."/>
            <person name="Newman L."/>
            <person name="Monchy S."/>
        </authorList>
    </citation>
    <scope>NUCLEOTIDE SEQUENCE [LARGE SCALE GENOMIC DNA]</scope>
    <source>
        <strain>638</strain>
    </source>
</reference>